<reference key="1">
    <citation type="journal article" date="2004" name="Proc. Natl. Acad. Sci. U.S.A.">
        <title>The diploid genome sequence of Candida albicans.</title>
        <authorList>
            <person name="Jones T."/>
            <person name="Federspiel N.A."/>
            <person name="Chibana H."/>
            <person name="Dungan J."/>
            <person name="Kalman S."/>
            <person name="Magee B.B."/>
            <person name="Newport G."/>
            <person name="Thorstenson Y.R."/>
            <person name="Agabian N."/>
            <person name="Magee P.T."/>
            <person name="Davis R.W."/>
            <person name="Scherer S."/>
        </authorList>
    </citation>
    <scope>NUCLEOTIDE SEQUENCE [LARGE SCALE GENOMIC DNA]</scope>
    <source>
        <strain>SC5314 / ATCC MYA-2876</strain>
    </source>
</reference>
<reference key="2">
    <citation type="journal article" date="2007" name="Genome Biol.">
        <title>Assembly of the Candida albicans genome into sixteen supercontigs aligned on the eight chromosomes.</title>
        <authorList>
            <person name="van het Hoog M."/>
            <person name="Rast T.J."/>
            <person name="Martchenko M."/>
            <person name="Grindle S."/>
            <person name="Dignard D."/>
            <person name="Hogues H."/>
            <person name="Cuomo C."/>
            <person name="Berriman M."/>
            <person name="Scherer S."/>
            <person name="Magee B.B."/>
            <person name="Whiteway M."/>
            <person name="Chibana H."/>
            <person name="Nantel A."/>
            <person name="Magee P.T."/>
        </authorList>
    </citation>
    <scope>GENOME REANNOTATION</scope>
    <source>
        <strain>SC5314 / ATCC MYA-2876</strain>
    </source>
</reference>
<reference key="3">
    <citation type="journal article" date="2013" name="Genome Biol.">
        <title>Assembly of a phased diploid Candida albicans genome facilitates allele-specific measurements and provides a simple model for repeat and indel structure.</title>
        <authorList>
            <person name="Muzzey D."/>
            <person name="Schwartz K."/>
            <person name="Weissman J.S."/>
            <person name="Sherlock G."/>
        </authorList>
    </citation>
    <scope>NUCLEOTIDE SEQUENCE [LARGE SCALE GENOMIC DNA]</scope>
    <scope>GENOME REANNOTATION</scope>
    <source>
        <strain>SC5314 / ATCC MYA-2876</strain>
    </source>
</reference>
<reference evidence="7 8" key="4">
    <citation type="journal article" date="2004" name="J. Mol. Biol.">
        <title>Potential anti-infective targets in pathogenic yeasts: structure and properties of 3,4-dihydroxy-2-butanone 4-phosphate synthase of Candida albicans.</title>
        <authorList>
            <person name="Echt S."/>
            <person name="Bauer S."/>
            <person name="Steinbacher S."/>
            <person name="Huber R."/>
            <person name="Bacher A."/>
            <person name="Fischer M."/>
        </authorList>
    </citation>
    <scope>NUCLEOTIDE SEQUENCE [GENOMIC DNA]</scope>
    <scope>PROTEIN SEQUENCE OF 2-8</scope>
    <scope>X-RAY CRYSTALLOGRAPHY (1.66 ANGSTROMS) IN COMPLEX WITH D-RIBULOSE 5-PHOSPHATE</scope>
    <scope>FUNCTION</scope>
    <scope>CATALYTIC ACTIVITY</scope>
    <scope>MASS SPECTROMETRY</scope>
    <scope>BIOPHYSICOCHEMICAL PROPERTIES</scope>
    <scope>MUTAGENESIS OF TYR-87; ASP-92 AND GLU-166</scope>
    <scope>SUBUNIT</scope>
    <scope>PATHWAY</scope>
</reference>
<dbReference type="EC" id="4.1.99.12" evidence="4"/>
<dbReference type="EMBL" id="CP017623">
    <property type="protein sequence ID" value="AOW26854.1"/>
    <property type="status" value="ALT_INIT"/>
    <property type="molecule type" value="Genomic_DNA"/>
</dbReference>
<dbReference type="RefSeq" id="XP_716297.2">
    <property type="nucleotide sequence ID" value="XM_711204.2"/>
</dbReference>
<dbReference type="PDB" id="1TKS">
    <property type="method" value="X-ray"/>
    <property type="resolution" value="1.60 A"/>
    <property type="chains" value="A/B=1-204"/>
</dbReference>
<dbReference type="PDB" id="1TKU">
    <property type="method" value="X-ray"/>
    <property type="resolution" value="1.66 A"/>
    <property type="chains" value="A/B=1-204"/>
</dbReference>
<dbReference type="PDB" id="2RIS">
    <property type="method" value="X-ray"/>
    <property type="resolution" value="1.60 A"/>
    <property type="chains" value="A=1-204"/>
</dbReference>
<dbReference type="PDB" id="2RIU">
    <property type="method" value="X-ray"/>
    <property type="resolution" value="1.70 A"/>
    <property type="chains" value="A=1-204"/>
</dbReference>
<dbReference type="PDBsum" id="1TKS"/>
<dbReference type="PDBsum" id="1TKU"/>
<dbReference type="PDBsum" id="2RIS"/>
<dbReference type="PDBsum" id="2RIU"/>
<dbReference type="SMR" id="Q5A3V6"/>
<dbReference type="BioGRID" id="1225049">
    <property type="interactions" value="1"/>
</dbReference>
<dbReference type="FunCoup" id="Q5A3V6">
    <property type="interactions" value="141"/>
</dbReference>
<dbReference type="STRING" id="237561.Q5A3V6"/>
<dbReference type="PeptideAtlas" id="Q5A3V6"/>
<dbReference type="GeneID" id="3642062"/>
<dbReference type="KEGG" id="cal:CAALFM_C112360CA"/>
<dbReference type="eggNOG" id="KOG1284">
    <property type="taxonomic scope" value="Eukaryota"/>
</dbReference>
<dbReference type="HOGENOM" id="CLU_020273_3_0_1"/>
<dbReference type="InParanoid" id="Q5A3V6"/>
<dbReference type="OrthoDB" id="60371at2759"/>
<dbReference type="BRENDA" id="4.1.99.12">
    <property type="organism ID" value="1096"/>
</dbReference>
<dbReference type="SABIO-RK" id="Q5A3V6"/>
<dbReference type="UniPathway" id="UPA00275">
    <property type="reaction ID" value="UER00399"/>
</dbReference>
<dbReference type="EvolutionaryTrace" id="Q5A3V6"/>
<dbReference type="PRO" id="PR:Q5A3V6"/>
<dbReference type="Proteomes" id="UP000000559">
    <property type="component" value="Chromosome 1"/>
</dbReference>
<dbReference type="GO" id="GO:0005829">
    <property type="term" value="C:cytosol"/>
    <property type="evidence" value="ECO:0000318"/>
    <property type="project" value="GO_Central"/>
</dbReference>
<dbReference type="GO" id="GO:0005758">
    <property type="term" value="C:mitochondrial intermembrane space"/>
    <property type="evidence" value="ECO:0000318"/>
    <property type="project" value="GO_Central"/>
</dbReference>
<dbReference type="GO" id="GO:0008686">
    <property type="term" value="F:3,4-dihydroxy-2-butanone-4-phosphate synthase activity"/>
    <property type="evidence" value="ECO:0000318"/>
    <property type="project" value="GO_Central"/>
</dbReference>
<dbReference type="GO" id="GO:0046872">
    <property type="term" value="F:metal ion binding"/>
    <property type="evidence" value="ECO:0007669"/>
    <property type="project" value="UniProtKB-KW"/>
</dbReference>
<dbReference type="GO" id="GO:0009231">
    <property type="term" value="P:riboflavin biosynthetic process"/>
    <property type="evidence" value="ECO:0000318"/>
    <property type="project" value="GO_Central"/>
</dbReference>
<dbReference type="FunFam" id="3.90.870.10:FF:000002">
    <property type="entry name" value="3,4-dihydroxy-2-butanone 4-phosphate synthase"/>
    <property type="match status" value="1"/>
</dbReference>
<dbReference type="Gene3D" id="3.90.870.10">
    <property type="entry name" value="DHBP synthase"/>
    <property type="match status" value="1"/>
</dbReference>
<dbReference type="HAMAP" id="MF_00180">
    <property type="entry name" value="RibB"/>
    <property type="match status" value="1"/>
</dbReference>
<dbReference type="InterPro" id="IPR017945">
    <property type="entry name" value="DHBP_synth_RibB-like_a/b_dom"/>
</dbReference>
<dbReference type="InterPro" id="IPR000422">
    <property type="entry name" value="DHBP_synthase_RibB"/>
</dbReference>
<dbReference type="NCBIfam" id="TIGR00506">
    <property type="entry name" value="ribB"/>
    <property type="match status" value="1"/>
</dbReference>
<dbReference type="PANTHER" id="PTHR21327:SF18">
    <property type="entry name" value="3,4-DIHYDROXY-2-BUTANONE 4-PHOSPHATE SYNTHASE"/>
    <property type="match status" value="1"/>
</dbReference>
<dbReference type="PANTHER" id="PTHR21327">
    <property type="entry name" value="GTP CYCLOHYDROLASE II-RELATED"/>
    <property type="match status" value="1"/>
</dbReference>
<dbReference type="Pfam" id="PF00926">
    <property type="entry name" value="DHBP_synthase"/>
    <property type="match status" value="1"/>
</dbReference>
<dbReference type="SUPFAM" id="SSF55821">
    <property type="entry name" value="YrdC/RibB"/>
    <property type="match status" value="1"/>
</dbReference>
<protein>
    <recommendedName>
        <fullName>3,4-dihydroxy-2-butanone 4-phosphate synthase</fullName>
        <shortName>DHBP synthase</shortName>
        <ecNumber evidence="4">4.1.99.12</ecNumber>
    </recommendedName>
</protein>
<accession>Q5A3V6</accession>
<accession>A0A1D8PFC4</accession>
<accession>Q5A3P2</accession>
<keyword id="KW-0002">3D-structure</keyword>
<keyword id="KW-0903">Direct protein sequencing</keyword>
<keyword id="KW-0318">Glutathionylation</keyword>
<keyword id="KW-0456">Lyase</keyword>
<keyword id="KW-0460">Magnesium</keyword>
<keyword id="KW-0464">Manganese</keyword>
<keyword id="KW-0479">Metal-binding</keyword>
<keyword id="KW-1185">Reference proteome</keyword>
<keyword id="KW-0686">Riboflavin biosynthesis</keyword>
<sequence length="204" mass="22658">MTNIFTPIEEALEAYKNGEFLIVMDDEDRENEGDLIMAAELITQEKMAFLVRYSSGYVCVPLSEERANQLELPPMLANRSDRHGTAYTITCDFAEGTTTGISAHDRALTTRSLANPNSKPQDFIKPGHILPLRAVPGLLKKRRGHTEAAVQLSTLAGLQPAGVICELVRDEDGLMMRLDDCIQFGKKHGIKIININQLVEYISK</sequence>
<organism>
    <name type="scientific">Candida albicans (strain SC5314 / ATCC MYA-2876)</name>
    <name type="common">Yeast</name>
    <dbReference type="NCBI Taxonomy" id="237561"/>
    <lineage>
        <taxon>Eukaryota</taxon>
        <taxon>Fungi</taxon>
        <taxon>Dikarya</taxon>
        <taxon>Ascomycota</taxon>
        <taxon>Saccharomycotina</taxon>
        <taxon>Pichiomycetes</taxon>
        <taxon>Debaryomycetaceae</taxon>
        <taxon>Candida/Lodderomyces clade</taxon>
        <taxon>Candida</taxon>
    </lineage>
</organism>
<name>RIB3_CANAL</name>
<comment type="function">
    <text evidence="4">Catalyzes the conversion of D-ribulose 5-phosphate to formate and 3,4-dihydroxy-2-butanone 4-phosphate.</text>
</comment>
<comment type="catalytic activity">
    <reaction evidence="4">
        <text>D-ribulose 5-phosphate = (2S)-2-hydroxy-3-oxobutyl phosphate + formate + H(+)</text>
        <dbReference type="Rhea" id="RHEA:18457"/>
        <dbReference type="ChEBI" id="CHEBI:15378"/>
        <dbReference type="ChEBI" id="CHEBI:15740"/>
        <dbReference type="ChEBI" id="CHEBI:58121"/>
        <dbReference type="ChEBI" id="CHEBI:58830"/>
        <dbReference type="EC" id="4.1.99.12"/>
    </reaction>
    <physiologicalReaction direction="left-to-right" evidence="6">
        <dbReference type="Rhea" id="RHEA:18458"/>
    </physiologicalReaction>
</comment>
<comment type="cofactor">
    <cofactor evidence="6">
        <name>Mg(2+)</name>
        <dbReference type="ChEBI" id="CHEBI:18420"/>
    </cofactor>
    <cofactor evidence="1">
        <name>Mn(2+)</name>
        <dbReference type="ChEBI" id="CHEBI:29035"/>
    </cofactor>
    <text evidence="1">Binds 2 divalent metal cations per subunit. Magnesium or manganese.</text>
</comment>
<comment type="biophysicochemical properties">
    <kinetics>
        <KM evidence="4">37 uM for D-ribulose-5-phosphate</KM>
        <Vmax evidence="4">332.0 nmol/min/mg enzyme</Vmax>
    </kinetics>
</comment>
<comment type="pathway">
    <text evidence="6">Cofactor biosynthesis; riboflavin biosynthesis; 2-hydroxy-3-oxobutyl phosphate from D-ribulose 5-phosphate: step 1/1.</text>
</comment>
<comment type="subunit">
    <text evidence="4">Homodimer.</text>
</comment>
<comment type="PTM">
    <text evidence="3">S-glutathionylation is reversible and dependent on a glutaredoxin.</text>
</comment>
<comment type="mass spectrometry" mass="22530.0" method="Electrospray" evidence="4"/>
<comment type="similarity">
    <text evidence="5">Belongs to the DHBP synthase family.</text>
</comment>
<comment type="sequence caution" evidence="6">
    <conflict type="erroneous initiation">
        <sequence resource="EMBL-CDS" id="AOW26854"/>
    </conflict>
    <text>Extended N-terminus.</text>
</comment>
<gene>
    <name type="primary">RIB3</name>
    <name type="ordered locus">CAALFM_C112360CA</name>
    <name type="ORF">CaO19.12693</name>
    <name type="ORF">CaO19.5228</name>
</gene>
<proteinExistence type="evidence at protein level"/>
<evidence type="ECO:0000250" key="1"/>
<evidence type="ECO:0000250" key="2">
    <source>
        <dbReference type="UniProtKB" id="Q8TG90"/>
    </source>
</evidence>
<evidence type="ECO:0000250" key="3">
    <source>
        <dbReference type="UniProtKB" id="Q99258"/>
    </source>
</evidence>
<evidence type="ECO:0000269" key="4">
    <source>
    </source>
</evidence>
<evidence type="ECO:0000305" key="5"/>
<evidence type="ECO:0000305" key="6">
    <source>
    </source>
</evidence>
<evidence type="ECO:0007744" key="7">
    <source>
        <dbReference type="PDB" id="1TKS"/>
    </source>
</evidence>
<evidence type="ECO:0007744" key="8">
    <source>
        <dbReference type="PDB" id="1TKU"/>
    </source>
</evidence>
<evidence type="ECO:0007744" key="9">
    <source>
        <dbReference type="PDB" id="2RIU"/>
    </source>
</evidence>
<evidence type="ECO:0007829" key="10">
    <source>
        <dbReference type="PDB" id="1TKS"/>
    </source>
</evidence>
<feature type="initiator methionine" description="Removed" evidence="4">
    <location>
        <position position="1"/>
    </location>
</feature>
<feature type="chain" id="PRO_0000296685" description="3,4-dihydroxy-2-butanone 4-phosphate synthase">
    <location>
        <begin position="2"/>
        <end position="204"/>
    </location>
</feature>
<feature type="binding site" evidence="2">
    <location>
        <position position="30"/>
    </location>
    <ligand>
        <name>Mg(2+)</name>
        <dbReference type="ChEBI" id="CHEBI:18420"/>
        <label>1</label>
    </ligand>
</feature>
<feature type="binding site" evidence="2">
    <location>
        <position position="30"/>
    </location>
    <ligand>
        <name>Mg(2+)</name>
        <dbReference type="ChEBI" id="CHEBI:18420"/>
        <label>2</label>
    </ligand>
</feature>
<feature type="binding site" evidence="4 8 9">
    <location>
        <position position="34"/>
    </location>
    <ligand>
        <name>D-ribulose 5-phosphate</name>
        <dbReference type="ChEBI" id="CHEBI:58121"/>
    </ligand>
</feature>
<feature type="binding site" evidence="4 8 9">
    <location>
        <position position="85"/>
    </location>
    <ligand>
        <name>D-ribulose 5-phosphate</name>
        <dbReference type="ChEBI" id="CHEBI:58121"/>
    </ligand>
</feature>
<feature type="binding site" evidence="4 8 9">
    <location>
        <begin position="142"/>
        <end position="146"/>
    </location>
    <ligand>
        <name>D-ribulose 5-phosphate</name>
        <dbReference type="ChEBI" id="CHEBI:58121"/>
    </ligand>
</feature>
<feature type="binding site" evidence="2">
    <location>
        <position position="145"/>
    </location>
    <ligand>
        <name>Mg(2+)</name>
        <dbReference type="ChEBI" id="CHEBI:18420"/>
        <label>2</label>
    </ligand>
</feature>
<feature type="site" description="Essential for catalytic activity" evidence="1">
    <location>
        <position position="128"/>
    </location>
</feature>
<feature type="site" description="Essential for catalytic activity" evidence="6">
    <location>
        <position position="166"/>
    </location>
</feature>
<feature type="modified residue" description="S-glutathionyl cysteine" evidence="3">
    <location>
        <position position="59"/>
    </location>
</feature>
<feature type="mutagenesis site" description="Increases Km for substrate 18-fold. Reduces activity by 30%.">
    <original>C</original>
    <variation>A</variation>
    <location>
        <position position="59"/>
    </location>
</feature>
<feature type="mutagenesis site" description="Increases Km for substrate 4-fold. Reduces activity by 98%." evidence="4">
    <original>Y</original>
    <variation>A</variation>
    <location>
        <position position="87"/>
    </location>
</feature>
<feature type="mutagenesis site" description="Loss of activity. Alters protein folding and stability." evidence="4">
    <original>D</original>
    <variation>A</variation>
    <location>
        <position position="92"/>
    </location>
</feature>
<feature type="mutagenesis site" description="Loss of activity." evidence="4">
    <original>E</original>
    <variation>A</variation>
    <location>
        <position position="166"/>
    </location>
</feature>
<feature type="sequence conflict" description="In Ref. 4." evidence="5" ref="4">
    <original>Q</original>
    <variation>R</variation>
    <location>
        <position position="183"/>
    </location>
</feature>
<feature type="helix" evidence="10">
    <location>
        <begin position="8"/>
        <end position="16"/>
    </location>
</feature>
<feature type="strand" evidence="10">
    <location>
        <begin position="21"/>
        <end position="27"/>
    </location>
</feature>
<feature type="strand" evidence="10">
    <location>
        <begin position="34"/>
        <end position="38"/>
    </location>
</feature>
<feature type="helix" evidence="10">
    <location>
        <begin position="39"/>
        <end position="41"/>
    </location>
</feature>
<feature type="helix" evidence="10">
    <location>
        <begin position="44"/>
        <end position="52"/>
    </location>
</feature>
<feature type="strand" evidence="10">
    <location>
        <begin position="59"/>
        <end position="63"/>
    </location>
</feature>
<feature type="helix" evidence="10">
    <location>
        <begin position="64"/>
        <end position="69"/>
    </location>
</feature>
<feature type="strand" evidence="10">
    <location>
        <begin position="91"/>
        <end position="94"/>
    </location>
</feature>
<feature type="strand" evidence="10">
    <location>
        <begin position="98"/>
        <end position="100"/>
    </location>
</feature>
<feature type="helix" evidence="10">
    <location>
        <begin position="103"/>
        <end position="114"/>
    </location>
</feature>
<feature type="helix" evidence="10">
    <location>
        <begin position="120"/>
        <end position="122"/>
    </location>
</feature>
<feature type="strand" evidence="10">
    <location>
        <begin position="123"/>
        <end position="134"/>
    </location>
</feature>
<feature type="helix" evidence="10">
    <location>
        <begin position="138"/>
        <end position="140"/>
    </location>
</feature>
<feature type="helix" evidence="10">
    <location>
        <begin position="145"/>
        <end position="155"/>
    </location>
</feature>
<feature type="strand" evidence="10">
    <location>
        <begin position="160"/>
        <end position="168"/>
    </location>
</feature>
<feature type="turn" evidence="10">
    <location>
        <begin position="170"/>
        <end position="172"/>
    </location>
</feature>
<feature type="helix" evidence="10">
    <location>
        <begin position="178"/>
        <end position="188"/>
    </location>
</feature>
<feature type="strand" evidence="10">
    <location>
        <begin position="192"/>
        <end position="194"/>
    </location>
</feature>
<feature type="helix" evidence="10">
    <location>
        <begin position="195"/>
        <end position="202"/>
    </location>
</feature>